<accession>A6V0A6</accession>
<name>RLMH_PSEP7</name>
<gene>
    <name evidence="1" type="primary">rlmH</name>
    <name type="ordered locus">PSPA7_1105</name>
</gene>
<feature type="chain" id="PRO_1000061824" description="Ribosomal RNA large subunit methyltransferase H">
    <location>
        <begin position="1"/>
        <end position="155"/>
    </location>
</feature>
<feature type="binding site" evidence="1">
    <location>
        <position position="73"/>
    </location>
    <ligand>
        <name>S-adenosyl-L-methionine</name>
        <dbReference type="ChEBI" id="CHEBI:59789"/>
    </ligand>
</feature>
<feature type="binding site" evidence="1">
    <location>
        <position position="104"/>
    </location>
    <ligand>
        <name>S-adenosyl-L-methionine</name>
        <dbReference type="ChEBI" id="CHEBI:59789"/>
    </ligand>
</feature>
<feature type="binding site" evidence="1">
    <location>
        <begin position="123"/>
        <end position="128"/>
    </location>
    <ligand>
        <name>S-adenosyl-L-methionine</name>
        <dbReference type="ChEBI" id="CHEBI:59789"/>
    </ligand>
</feature>
<comment type="function">
    <text evidence="1">Specifically methylates the pseudouridine at position 1915 (m3Psi1915) in 23S rRNA.</text>
</comment>
<comment type="catalytic activity">
    <reaction evidence="1">
        <text>pseudouridine(1915) in 23S rRNA + S-adenosyl-L-methionine = N(3)-methylpseudouridine(1915) in 23S rRNA + S-adenosyl-L-homocysteine + H(+)</text>
        <dbReference type="Rhea" id="RHEA:42752"/>
        <dbReference type="Rhea" id="RHEA-COMP:10221"/>
        <dbReference type="Rhea" id="RHEA-COMP:10222"/>
        <dbReference type="ChEBI" id="CHEBI:15378"/>
        <dbReference type="ChEBI" id="CHEBI:57856"/>
        <dbReference type="ChEBI" id="CHEBI:59789"/>
        <dbReference type="ChEBI" id="CHEBI:65314"/>
        <dbReference type="ChEBI" id="CHEBI:74486"/>
        <dbReference type="EC" id="2.1.1.177"/>
    </reaction>
</comment>
<comment type="subunit">
    <text evidence="1">Homodimer.</text>
</comment>
<comment type="subcellular location">
    <subcellularLocation>
        <location evidence="1">Cytoplasm</location>
    </subcellularLocation>
</comment>
<comment type="similarity">
    <text evidence="1">Belongs to the RNA methyltransferase RlmH family.</text>
</comment>
<keyword id="KW-0963">Cytoplasm</keyword>
<keyword id="KW-0489">Methyltransferase</keyword>
<keyword id="KW-0698">rRNA processing</keyword>
<keyword id="KW-0949">S-adenosyl-L-methionine</keyword>
<keyword id="KW-0808">Transferase</keyword>
<organism>
    <name type="scientific">Pseudomonas paraeruginosa (strain DSM 24068 / PA7)</name>
    <name type="common">Pseudomonas aeruginosa (strain PA7)</name>
    <dbReference type="NCBI Taxonomy" id="381754"/>
    <lineage>
        <taxon>Bacteria</taxon>
        <taxon>Pseudomonadati</taxon>
        <taxon>Pseudomonadota</taxon>
        <taxon>Gammaproteobacteria</taxon>
        <taxon>Pseudomonadales</taxon>
        <taxon>Pseudomonadaceae</taxon>
        <taxon>Pseudomonas</taxon>
        <taxon>Pseudomonas paraeruginosa</taxon>
    </lineage>
</organism>
<sequence length="155" mass="17791">MRLRLIAVGSRMPRWVEEGWQEYVKRLPAELSLELVEIPLNTRGKNADVARLIRQEGEAMLARVQPGERVVTLEVEGRPWSTEQLARELDRWRLDARTVNLMVGGPEGLAPEVCARSEQRWSLSPLTLPHPLVRILVGEQIYRAWTVLSGHPYHK</sequence>
<reference key="1">
    <citation type="submission" date="2007-06" db="EMBL/GenBank/DDBJ databases">
        <authorList>
            <person name="Dodson R.J."/>
            <person name="Harkins D."/>
            <person name="Paulsen I.T."/>
        </authorList>
    </citation>
    <scope>NUCLEOTIDE SEQUENCE [LARGE SCALE GENOMIC DNA]</scope>
    <source>
        <strain>DSM 24068 / PA7</strain>
    </source>
</reference>
<evidence type="ECO:0000255" key="1">
    <source>
        <dbReference type="HAMAP-Rule" id="MF_00658"/>
    </source>
</evidence>
<dbReference type="EC" id="2.1.1.177" evidence="1"/>
<dbReference type="EMBL" id="CP000744">
    <property type="protein sequence ID" value="ABR86480.1"/>
    <property type="molecule type" value="Genomic_DNA"/>
</dbReference>
<dbReference type="RefSeq" id="WP_003093193.1">
    <property type="nucleotide sequence ID" value="NC_009656.1"/>
</dbReference>
<dbReference type="SMR" id="A6V0A6"/>
<dbReference type="KEGG" id="pap:PSPA7_1105"/>
<dbReference type="HOGENOM" id="CLU_100552_1_0_6"/>
<dbReference type="Proteomes" id="UP000001582">
    <property type="component" value="Chromosome"/>
</dbReference>
<dbReference type="GO" id="GO:0005737">
    <property type="term" value="C:cytoplasm"/>
    <property type="evidence" value="ECO:0007669"/>
    <property type="project" value="UniProtKB-SubCell"/>
</dbReference>
<dbReference type="GO" id="GO:0070038">
    <property type="term" value="F:rRNA (pseudouridine-N3-)-methyltransferase activity"/>
    <property type="evidence" value="ECO:0007669"/>
    <property type="project" value="UniProtKB-UniRule"/>
</dbReference>
<dbReference type="CDD" id="cd18081">
    <property type="entry name" value="RlmH-like"/>
    <property type="match status" value="1"/>
</dbReference>
<dbReference type="Gene3D" id="3.40.1280.10">
    <property type="match status" value="1"/>
</dbReference>
<dbReference type="HAMAP" id="MF_00658">
    <property type="entry name" value="23SrRNA_methyltr_H"/>
    <property type="match status" value="1"/>
</dbReference>
<dbReference type="InterPro" id="IPR029028">
    <property type="entry name" value="Alpha/beta_knot_MTases"/>
</dbReference>
<dbReference type="InterPro" id="IPR003742">
    <property type="entry name" value="RlmH-like"/>
</dbReference>
<dbReference type="InterPro" id="IPR029026">
    <property type="entry name" value="tRNA_m1G_MTases_N"/>
</dbReference>
<dbReference type="NCBIfam" id="NF000986">
    <property type="entry name" value="PRK00103.1-4"/>
    <property type="match status" value="1"/>
</dbReference>
<dbReference type="NCBIfam" id="TIGR00246">
    <property type="entry name" value="tRNA_RlmH_YbeA"/>
    <property type="match status" value="1"/>
</dbReference>
<dbReference type="PANTHER" id="PTHR33603">
    <property type="entry name" value="METHYLTRANSFERASE"/>
    <property type="match status" value="1"/>
</dbReference>
<dbReference type="PANTHER" id="PTHR33603:SF1">
    <property type="entry name" value="RIBOSOMAL RNA LARGE SUBUNIT METHYLTRANSFERASE H"/>
    <property type="match status" value="1"/>
</dbReference>
<dbReference type="Pfam" id="PF02590">
    <property type="entry name" value="SPOUT_MTase"/>
    <property type="match status" value="1"/>
</dbReference>
<dbReference type="PIRSF" id="PIRSF004505">
    <property type="entry name" value="MT_bac"/>
    <property type="match status" value="1"/>
</dbReference>
<dbReference type="SUPFAM" id="SSF75217">
    <property type="entry name" value="alpha/beta knot"/>
    <property type="match status" value="1"/>
</dbReference>
<proteinExistence type="inferred from homology"/>
<protein>
    <recommendedName>
        <fullName evidence="1">Ribosomal RNA large subunit methyltransferase H</fullName>
        <ecNumber evidence="1">2.1.1.177</ecNumber>
    </recommendedName>
    <alternativeName>
        <fullName evidence="1">23S rRNA (pseudouridine1915-N3)-methyltransferase</fullName>
    </alternativeName>
    <alternativeName>
        <fullName evidence="1">23S rRNA m3Psi1915 methyltransferase</fullName>
    </alternativeName>
    <alternativeName>
        <fullName evidence="1">rRNA (pseudouridine-N3-)-methyltransferase RlmH</fullName>
    </alternativeName>
</protein>